<accession>Q8G575</accession>
<feature type="chain" id="PRO_0000135633" description="Pyridoxal 5'-phosphate synthase subunit PdxT">
    <location>
        <begin position="1"/>
        <end position="190"/>
    </location>
</feature>
<feature type="active site" description="Nucleophile" evidence="1">
    <location>
        <position position="78"/>
    </location>
</feature>
<feature type="active site" description="Charge relay system" evidence="1">
    <location>
        <position position="174"/>
    </location>
</feature>
<feature type="active site" description="Charge relay system" evidence="1">
    <location>
        <position position="176"/>
    </location>
</feature>
<feature type="binding site" evidence="1">
    <location>
        <begin position="46"/>
        <end position="48"/>
    </location>
    <ligand>
        <name>L-glutamine</name>
        <dbReference type="ChEBI" id="CHEBI:58359"/>
    </ligand>
</feature>
<feature type="binding site" evidence="1">
    <location>
        <position position="105"/>
    </location>
    <ligand>
        <name>L-glutamine</name>
        <dbReference type="ChEBI" id="CHEBI:58359"/>
    </ligand>
</feature>
<feature type="binding site" evidence="1">
    <location>
        <begin position="138"/>
        <end position="139"/>
    </location>
    <ligand>
        <name>L-glutamine</name>
        <dbReference type="ChEBI" id="CHEBI:58359"/>
    </ligand>
</feature>
<evidence type="ECO:0000255" key="1">
    <source>
        <dbReference type="HAMAP-Rule" id="MF_01615"/>
    </source>
</evidence>
<evidence type="ECO:0000305" key="2"/>
<reference key="1">
    <citation type="journal article" date="2002" name="Proc. Natl. Acad. Sci. U.S.A.">
        <title>The genome sequence of Bifidobacterium longum reflects its adaptation to the human gastrointestinal tract.</title>
        <authorList>
            <person name="Schell M.A."/>
            <person name="Karmirantzou M."/>
            <person name="Snel B."/>
            <person name="Vilanova D."/>
            <person name="Berger B."/>
            <person name="Pessi G."/>
            <person name="Zwahlen M.-C."/>
            <person name="Desiere F."/>
            <person name="Bork P."/>
            <person name="Delley M."/>
            <person name="Pridmore R.D."/>
            <person name="Arigoni F."/>
        </authorList>
    </citation>
    <scope>NUCLEOTIDE SEQUENCE [LARGE SCALE GENOMIC DNA]</scope>
    <source>
        <strain>NCC 2705</strain>
    </source>
</reference>
<organism>
    <name type="scientific">Bifidobacterium longum (strain NCC 2705)</name>
    <dbReference type="NCBI Taxonomy" id="206672"/>
    <lineage>
        <taxon>Bacteria</taxon>
        <taxon>Bacillati</taxon>
        <taxon>Actinomycetota</taxon>
        <taxon>Actinomycetes</taxon>
        <taxon>Bifidobacteriales</taxon>
        <taxon>Bifidobacteriaceae</taxon>
        <taxon>Bifidobacterium</taxon>
    </lineage>
</organism>
<name>PDXT_BIFLO</name>
<keyword id="KW-0315">Glutamine amidotransferase</keyword>
<keyword id="KW-0378">Hydrolase</keyword>
<keyword id="KW-0456">Lyase</keyword>
<keyword id="KW-0663">Pyridoxal phosphate</keyword>
<keyword id="KW-1185">Reference proteome</keyword>
<protein>
    <recommendedName>
        <fullName evidence="1">Pyridoxal 5'-phosphate synthase subunit PdxT</fullName>
        <ecNumber evidence="1">4.3.3.6</ecNumber>
    </recommendedName>
    <alternativeName>
        <fullName evidence="1">Pdx2</fullName>
    </alternativeName>
    <alternativeName>
        <fullName evidence="1">Pyridoxal 5'-phosphate synthase glutaminase subunit</fullName>
        <ecNumber evidence="1">3.5.1.2</ecNumber>
    </alternativeName>
</protein>
<dbReference type="EC" id="4.3.3.6" evidence="1"/>
<dbReference type="EC" id="3.5.1.2" evidence="1"/>
<dbReference type="EMBL" id="AE014295">
    <property type="protein sequence ID" value="AAN24950.1"/>
    <property type="status" value="ALT_INIT"/>
    <property type="molecule type" value="Genomic_DNA"/>
</dbReference>
<dbReference type="RefSeq" id="NP_696314.1">
    <property type="nucleotide sequence ID" value="NC_004307.2"/>
</dbReference>
<dbReference type="SMR" id="Q8G575"/>
<dbReference type="STRING" id="206672.BL1145"/>
<dbReference type="EnsemblBacteria" id="AAN24950">
    <property type="protein sequence ID" value="AAN24950"/>
    <property type="gene ID" value="BL1145"/>
</dbReference>
<dbReference type="KEGG" id="blo:BL1145"/>
<dbReference type="PATRIC" id="fig|206672.9.peg.855"/>
<dbReference type="HOGENOM" id="CLU_069674_2_0_11"/>
<dbReference type="OrthoDB" id="9810320at2"/>
<dbReference type="UniPathway" id="UPA00245"/>
<dbReference type="Proteomes" id="UP000000439">
    <property type="component" value="Chromosome"/>
</dbReference>
<dbReference type="GO" id="GO:0005829">
    <property type="term" value="C:cytosol"/>
    <property type="evidence" value="ECO:0007669"/>
    <property type="project" value="TreeGrafter"/>
</dbReference>
<dbReference type="GO" id="GO:1903600">
    <property type="term" value="C:glutaminase complex"/>
    <property type="evidence" value="ECO:0007669"/>
    <property type="project" value="TreeGrafter"/>
</dbReference>
<dbReference type="GO" id="GO:0004359">
    <property type="term" value="F:glutaminase activity"/>
    <property type="evidence" value="ECO:0007669"/>
    <property type="project" value="UniProtKB-UniRule"/>
</dbReference>
<dbReference type="GO" id="GO:0036381">
    <property type="term" value="F:pyridoxal 5'-phosphate synthase (glutamine hydrolysing) activity"/>
    <property type="evidence" value="ECO:0007669"/>
    <property type="project" value="UniProtKB-UniRule"/>
</dbReference>
<dbReference type="GO" id="GO:0006543">
    <property type="term" value="P:glutamine catabolic process"/>
    <property type="evidence" value="ECO:0007669"/>
    <property type="project" value="UniProtKB-UniRule"/>
</dbReference>
<dbReference type="GO" id="GO:0042823">
    <property type="term" value="P:pyridoxal phosphate biosynthetic process"/>
    <property type="evidence" value="ECO:0007669"/>
    <property type="project" value="UniProtKB-UniRule"/>
</dbReference>
<dbReference type="GO" id="GO:0008614">
    <property type="term" value="P:pyridoxine metabolic process"/>
    <property type="evidence" value="ECO:0007669"/>
    <property type="project" value="TreeGrafter"/>
</dbReference>
<dbReference type="CDD" id="cd01749">
    <property type="entry name" value="GATase1_PB"/>
    <property type="match status" value="1"/>
</dbReference>
<dbReference type="FunFam" id="3.40.50.880:FF:000010">
    <property type="entry name" value="uncharacterized protein LOC100176842 isoform X2"/>
    <property type="match status" value="1"/>
</dbReference>
<dbReference type="Gene3D" id="3.40.50.880">
    <property type="match status" value="1"/>
</dbReference>
<dbReference type="HAMAP" id="MF_01615">
    <property type="entry name" value="PdxT"/>
    <property type="match status" value="1"/>
</dbReference>
<dbReference type="InterPro" id="IPR029062">
    <property type="entry name" value="Class_I_gatase-like"/>
</dbReference>
<dbReference type="InterPro" id="IPR002161">
    <property type="entry name" value="PdxT/SNO"/>
</dbReference>
<dbReference type="InterPro" id="IPR021196">
    <property type="entry name" value="PdxT/SNO_CS"/>
</dbReference>
<dbReference type="NCBIfam" id="TIGR03800">
    <property type="entry name" value="PLP_synth_Pdx2"/>
    <property type="match status" value="1"/>
</dbReference>
<dbReference type="PANTHER" id="PTHR31559">
    <property type="entry name" value="PYRIDOXAL 5'-PHOSPHATE SYNTHASE SUBUNIT SNO"/>
    <property type="match status" value="1"/>
</dbReference>
<dbReference type="PANTHER" id="PTHR31559:SF0">
    <property type="entry name" value="PYRIDOXAL 5'-PHOSPHATE SYNTHASE SUBUNIT SNO1-RELATED"/>
    <property type="match status" value="1"/>
</dbReference>
<dbReference type="Pfam" id="PF01174">
    <property type="entry name" value="SNO"/>
    <property type="match status" value="1"/>
</dbReference>
<dbReference type="PIRSF" id="PIRSF005639">
    <property type="entry name" value="Glut_amidoT_SNO"/>
    <property type="match status" value="1"/>
</dbReference>
<dbReference type="SUPFAM" id="SSF52317">
    <property type="entry name" value="Class I glutamine amidotransferase-like"/>
    <property type="match status" value="1"/>
</dbReference>
<dbReference type="PROSITE" id="PS01236">
    <property type="entry name" value="PDXT_SNO_1"/>
    <property type="match status" value="1"/>
</dbReference>
<dbReference type="PROSITE" id="PS51130">
    <property type="entry name" value="PDXT_SNO_2"/>
    <property type="match status" value="1"/>
</dbReference>
<proteinExistence type="inferred from homology"/>
<comment type="function">
    <text evidence="1">Catalyzes the hydrolysis of glutamine to glutamate and ammonia as part of the biosynthesis of pyridoxal 5'-phosphate. The resulting ammonia molecule is channeled to the active site of PdxS.</text>
</comment>
<comment type="catalytic activity">
    <reaction evidence="1">
        <text>aldehydo-D-ribose 5-phosphate + D-glyceraldehyde 3-phosphate + L-glutamine = pyridoxal 5'-phosphate + L-glutamate + phosphate + 3 H2O + H(+)</text>
        <dbReference type="Rhea" id="RHEA:31507"/>
        <dbReference type="ChEBI" id="CHEBI:15377"/>
        <dbReference type="ChEBI" id="CHEBI:15378"/>
        <dbReference type="ChEBI" id="CHEBI:29985"/>
        <dbReference type="ChEBI" id="CHEBI:43474"/>
        <dbReference type="ChEBI" id="CHEBI:58273"/>
        <dbReference type="ChEBI" id="CHEBI:58359"/>
        <dbReference type="ChEBI" id="CHEBI:59776"/>
        <dbReference type="ChEBI" id="CHEBI:597326"/>
        <dbReference type="EC" id="4.3.3.6"/>
    </reaction>
</comment>
<comment type="catalytic activity">
    <reaction evidence="1">
        <text>L-glutamine + H2O = L-glutamate + NH4(+)</text>
        <dbReference type="Rhea" id="RHEA:15889"/>
        <dbReference type="ChEBI" id="CHEBI:15377"/>
        <dbReference type="ChEBI" id="CHEBI:28938"/>
        <dbReference type="ChEBI" id="CHEBI:29985"/>
        <dbReference type="ChEBI" id="CHEBI:58359"/>
        <dbReference type="EC" id="3.5.1.2"/>
    </reaction>
</comment>
<comment type="pathway">
    <text evidence="1">Cofactor biosynthesis; pyridoxal 5'-phosphate biosynthesis.</text>
</comment>
<comment type="subunit">
    <text evidence="1">In the presence of PdxS, forms a dodecamer of heterodimers. Only shows activity in the heterodimer.</text>
</comment>
<comment type="similarity">
    <text evidence="1">Belongs to the glutaminase PdxT/SNO family.</text>
</comment>
<comment type="sequence caution" evidence="2">
    <conflict type="erroneous initiation">
        <sequence resource="EMBL-CDS" id="AAN24950"/>
    </conflict>
</comment>
<sequence length="190" mass="20370">MTGILAVQGAFAEHAAVLDKLGAPWKLLRAAEDFDESIDRVILPGGESTTQGKLLHSTGLFEPIAAHIKAGKPVFGTCAGMILLAKKLDNDDNVYFGALDAVVRRNAYGRQLGSFQATADFGAADDPQRITDFPLVFIRGPYVVSVGPEATVETEVDGHVVGLRQGNILATAFHPELTDDTRIHELFLSL</sequence>
<gene>
    <name evidence="1" type="primary">pdxT</name>
    <name type="ordered locus">BL1145</name>
</gene>